<protein>
    <recommendedName>
        <fullName evidence="1">Probable chemoreceptor glutamine deamidase CheD 1</fullName>
        <ecNumber evidence="1">3.5.1.44</ecNumber>
    </recommendedName>
</protein>
<accession>Q8TUQ4</accession>
<comment type="function">
    <text evidence="1">Probably deamidates glutamine residues to glutamate on methyl-accepting chemotaxis receptors (MCPs), playing an important role in chemotaxis.</text>
</comment>
<comment type="catalytic activity">
    <reaction evidence="1">
        <text>L-glutaminyl-[protein] + H2O = L-glutamyl-[protein] + NH4(+)</text>
        <dbReference type="Rhea" id="RHEA:16441"/>
        <dbReference type="Rhea" id="RHEA-COMP:10207"/>
        <dbReference type="Rhea" id="RHEA-COMP:10208"/>
        <dbReference type="ChEBI" id="CHEBI:15377"/>
        <dbReference type="ChEBI" id="CHEBI:28938"/>
        <dbReference type="ChEBI" id="CHEBI:29973"/>
        <dbReference type="ChEBI" id="CHEBI:30011"/>
        <dbReference type="EC" id="3.5.1.44"/>
    </reaction>
</comment>
<comment type="similarity">
    <text evidence="1">Belongs to the CheD family.</text>
</comment>
<dbReference type="EC" id="3.5.1.44" evidence="1"/>
<dbReference type="EMBL" id="AE010299">
    <property type="protein sequence ID" value="AAM03465.1"/>
    <property type="molecule type" value="Genomic_DNA"/>
</dbReference>
<dbReference type="SMR" id="Q8TUQ4"/>
<dbReference type="STRING" id="188937.MA_0011"/>
<dbReference type="EnsemblBacteria" id="AAM03465">
    <property type="protein sequence ID" value="AAM03465"/>
    <property type="gene ID" value="MA_0011"/>
</dbReference>
<dbReference type="KEGG" id="mac:MA_0011"/>
<dbReference type="HOGENOM" id="CLU_087854_2_0_2"/>
<dbReference type="InParanoid" id="Q8TUQ4"/>
<dbReference type="OrthoDB" id="10499at2157"/>
<dbReference type="PhylomeDB" id="Q8TUQ4"/>
<dbReference type="Proteomes" id="UP000002487">
    <property type="component" value="Chromosome"/>
</dbReference>
<dbReference type="GO" id="GO:0050568">
    <property type="term" value="F:protein-glutamine glutaminase activity"/>
    <property type="evidence" value="ECO:0007669"/>
    <property type="project" value="UniProtKB-UniRule"/>
</dbReference>
<dbReference type="GO" id="GO:0006935">
    <property type="term" value="P:chemotaxis"/>
    <property type="evidence" value="ECO:0007669"/>
    <property type="project" value="UniProtKB-UniRule"/>
</dbReference>
<dbReference type="CDD" id="cd16352">
    <property type="entry name" value="CheD"/>
    <property type="match status" value="1"/>
</dbReference>
<dbReference type="Gene3D" id="3.30.1330.200">
    <property type="match status" value="1"/>
</dbReference>
<dbReference type="HAMAP" id="MF_01440">
    <property type="entry name" value="CheD"/>
    <property type="match status" value="1"/>
</dbReference>
<dbReference type="InterPro" id="IPR038592">
    <property type="entry name" value="CheD-like_sf"/>
</dbReference>
<dbReference type="InterPro" id="IPR005659">
    <property type="entry name" value="Chemorcpt_Glu_NH3ase_CheD"/>
</dbReference>
<dbReference type="InterPro" id="IPR011324">
    <property type="entry name" value="Cytotoxic_necrot_fac-like_cat"/>
</dbReference>
<dbReference type="PANTHER" id="PTHR35147">
    <property type="entry name" value="CHEMORECEPTOR GLUTAMINE DEAMIDASE CHED-RELATED"/>
    <property type="match status" value="1"/>
</dbReference>
<dbReference type="PANTHER" id="PTHR35147:SF1">
    <property type="entry name" value="CHEMORECEPTOR GLUTAMINE DEAMIDASE CHED-RELATED"/>
    <property type="match status" value="1"/>
</dbReference>
<dbReference type="Pfam" id="PF03975">
    <property type="entry name" value="CheD"/>
    <property type="match status" value="1"/>
</dbReference>
<dbReference type="SUPFAM" id="SSF64438">
    <property type="entry name" value="CNF1/YfiH-like putative cysteine hydrolases"/>
    <property type="match status" value="1"/>
</dbReference>
<feature type="chain" id="PRO_0000251089" description="Probable chemoreceptor glutamine deamidase CheD 1">
    <location>
        <begin position="1"/>
        <end position="159"/>
    </location>
</feature>
<organism>
    <name type="scientific">Methanosarcina acetivorans (strain ATCC 35395 / DSM 2834 / JCM 12185 / C2A)</name>
    <dbReference type="NCBI Taxonomy" id="188937"/>
    <lineage>
        <taxon>Archaea</taxon>
        <taxon>Methanobacteriati</taxon>
        <taxon>Methanobacteriota</taxon>
        <taxon>Stenosarchaea group</taxon>
        <taxon>Methanomicrobia</taxon>
        <taxon>Methanosarcinales</taxon>
        <taxon>Methanosarcinaceae</taxon>
        <taxon>Methanosarcina</taxon>
    </lineage>
</organism>
<keyword id="KW-0145">Chemotaxis</keyword>
<keyword id="KW-0378">Hydrolase</keyword>
<keyword id="KW-1185">Reference proteome</keyword>
<proteinExistence type="inferred from homology"/>
<name>CHED1_METAC</name>
<evidence type="ECO:0000255" key="1">
    <source>
        <dbReference type="HAMAP-Rule" id="MF_01440"/>
    </source>
</evidence>
<gene>
    <name evidence="1" type="primary">cheD1</name>
    <name type="synonym">cheD2</name>
    <name type="ordered locus">MA_0011</name>
</gene>
<reference key="1">
    <citation type="journal article" date="2002" name="Genome Res.">
        <title>The genome of Methanosarcina acetivorans reveals extensive metabolic and physiological diversity.</title>
        <authorList>
            <person name="Galagan J.E."/>
            <person name="Nusbaum C."/>
            <person name="Roy A."/>
            <person name="Endrizzi M.G."/>
            <person name="Macdonald P."/>
            <person name="FitzHugh W."/>
            <person name="Calvo S."/>
            <person name="Engels R."/>
            <person name="Smirnov S."/>
            <person name="Atnoor D."/>
            <person name="Brown A."/>
            <person name="Allen N."/>
            <person name="Naylor J."/>
            <person name="Stange-Thomann N."/>
            <person name="DeArellano K."/>
            <person name="Johnson R."/>
            <person name="Linton L."/>
            <person name="McEwan P."/>
            <person name="McKernan K."/>
            <person name="Talamas J."/>
            <person name="Tirrell A."/>
            <person name="Ye W."/>
            <person name="Zimmer A."/>
            <person name="Barber R.D."/>
            <person name="Cann I."/>
            <person name="Graham D.E."/>
            <person name="Grahame D.A."/>
            <person name="Guss A.M."/>
            <person name="Hedderich R."/>
            <person name="Ingram-Smith C."/>
            <person name="Kuettner H.C."/>
            <person name="Krzycki J.A."/>
            <person name="Leigh J.A."/>
            <person name="Li W."/>
            <person name="Liu J."/>
            <person name="Mukhopadhyay B."/>
            <person name="Reeve J.N."/>
            <person name="Smith K."/>
            <person name="Springer T.A."/>
            <person name="Umayam L.A."/>
            <person name="White O."/>
            <person name="White R.H."/>
            <person name="de Macario E.C."/>
            <person name="Ferry J.G."/>
            <person name="Jarrell K.F."/>
            <person name="Jing H."/>
            <person name="Macario A.J.L."/>
            <person name="Paulsen I.T."/>
            <person name="Pritchett M."/>
            <person name="Sowers K.R."/>
            <person name="Swanson R.V."/>
            <person name="Zinder S.H."/>
            <person name="Lander E."/>
            <person name="Metcalf W.W."/>
            <person name="Birren B."/>
        </authorList>
    </citation>
    <scope>NUCLEOTIDE SEQUENCE [LARGE SCALE GENOMIC DNA]</scope>
    <source>
        <strain>ATCC 35395 / DSM 2834 / JCM 12185 / C2A</strain>
    </source>
</reference>
<sequence>MADPGIVMVGIGDCAIARCPVKIKTSGLGSCVGVTIYDRHEKIGGLLHTMLPNIKKAGIKDNPTKFTDAGIEYLVAEIIENGGSRRKLEAKLVGGSSMFENSHMNIGERNIKSAKETLKKLGLEIIAEDTGKNYGRTIIFDTLTGDLLIKTMLRGDKVI</sequence>